<feature type="chain" id="PRO_0000282012" description="23S rRNA (uracil(747)-C(5))-methyltransferase RlmC">
    <location>
        <begin position="1"/>
        <end position="384"/>
    </location>
</feature>
<feature type="active site" description="Nucleophile" evidence="1">
    <location>
        <position position="336"/>
    </location>
</feature>
<feature type="binding site" evidence="1">
    <location>
        <position position="3"/>
    </location>
    <ligand>
        <name>[4Fe-4S] cluster</name>
        <dbReference type="ChEBI" id="CHEBI:49883"/>
    </ligand>
</feature>
<feature type="binding site" evidence="1">
    <location>
        <position position="11"/>
    </location>
    <ligand>
        <name>[4Fe-4S] cluster</name>
        <dbReference type="ChEBI" id="CHEBI:49883"/>
    </ligand>
</feature>
<feature type="binding site" evidence="1">
    <location>
        <position position="14"/>
    </location>
    <ligand>
        <name>[4Fe-4S] cluster</name>
        <dbReference type="ChEBI" id="CHEBI:49883"/>
    </ligand>
</feature>
<feature type="binding site" evidence="1">
    <location>
        <position position="87"/>
    </location>
    <ligand>
        <name>[4Fe-4S] cluster</name>
        <dbReference type="ChEBI" id="CHEBI:49883"/>
    </ligand>
</feature>
<feature type="binding site" evidence="1">
    <location>
        <position position="212"/>
    </location>
    <ligand>
        <name>S-adenosyl-L-methionine</name>
        <dbReference type="ChEBI" id="CHEBI:59789"/>
    </ligand>
</feature>
<feature type="binding site" evidence="1">
    <location>
        <position position="241"/>
    </location>
    <ligand>
        <name>S-adenosyl-L-methionine</name>
        <dbReference type="ChEBI" id="CHEBI:59789"/>
    </ligand>
</feature>
<feature type="binding site" evidence="1">
    <location>
        <position position="262"/>
    </location>
    <ligand>
        <name>S-adenosyl-L-methionine</name>
        <dbReference type="ChEBI" id="CHEBI:59789"/>
    </ligand>
</feature>
<feature type="binding site" evidence="1">
    <location>
        <position position="309"/>
    </location>
    <ligand>
        <name>S-adenosyl-L-methionine</name>
        <dbReference type="ChEBI" id="CHEBI:59789"/>
    </ligand>
</feature>
<name>RLMC_SHEAM</name>
<organism>
    <name type="scientific">Shewanella amazonensis (strain ATCC BAA-1098 / SB2B)</name>
    <dbReference type="NCBI Taxonomy" id="326297"/>
    <lineage>
        <taxon>Bacteria</taxon>
        <taxon>Pseudomonadati</taxon>
        <taxon>Pseudomonadota</taxon>
        <taxon>Gammaproteobacteria</taxon>
        <taxon>Alteromonadales</taxon>
        <taxon>Shewanellaceae</taxon>
        <taxon>Shewanella</taxon>
    </lineage>
</organism>
<keyword id="KW-0004">4Fe-4S</keyword>
<keyword id="KW-0408">Iron</keyword>
<keyword id="KW-0411">Iron-sulfur</keyword>
<keyword id="KW-0479">Metal-binding</keyword>
<keyword id="KW-0489">Methyltransferase</keyword>
<keyword id="KW-1185">Reference proteome</keyword>
<keyword id="KW-0698">rRNA processing</keyword>
<keyword id="KW-0949">S-adenosyl-L-methionine</keyword>
<keyword id="KW-0808">Transferase</keyword>
<reference key="1">
    <citation type="submission" date="2006-12" db="EMBL/GenBank/DDBJ databases">
        <title>Complete sequence of Shewanella amazonensis SB2B.</title>
        <authorList>
            <consortium name="US DOE Joint Genome Institute"/>
            <person name="Copeland A."/>
            <person name="Lucas S."/>
            <person name="Lapidus A."/>
            <person name="Barry K."/>
            <person name="Detter J.C."/>
            <person name="Glavina del Rio T."/>
            <person name="Hammon N."/>
            <person name="Israni S."/>
            <person name="Dalin E."/>
            <person name="Tice H."/>
            <person name="Pitluck S."/>
            <person name="Munk A.C."/>
            <person name="Brettin T."/>
            <person name="Bruce D."/>
            <person name="Han C."/>
            <person name="Tapia R."/>
            <person name="Gilna P."/>
            <person name="Schmutz J."/>
            <person name="Larimer F."/>
            <person name="Land M."/>
            <person name="Hauser L."/>
            <person name="Kyrpides N."/>
            <person name="Mikhailova N."/>
            <person name="Fredrickson J."/>
            <person name="Richardson P."/>
        </authorList>
    </citation>
    <scope>NUCLEOTIDE SEQUENCE [LARGE SCALE GENOMIC DNA]</scope>
    <source>
        <strain>ATCC BAA-1098 / SB2B</strain>
    </source>
</reference>
<dbReference type="EC" id="2.1.1.189" evidence="1"/>
<dbReference type="EMBL" id="CP000507">
    <property type="protein sequence ID" value="ABL98838.1"/>
    <property type="molecule type" value="Genomic_DNA"/>
</dbReference>
<dbReference type="SMR" id="A1S382"/>
<dbReference type="STRING" id="326297.Sama_0630"/>
<dbReference type="KEGG" id="saz:Sama_0630"/>
<dbReference type="eggNOG" id="COG2265">
    <property type="taxonomic scope" value="Bacteria"/>
</dbReference>
<dbReference type="HOGENOM" id="CLU_014689_0_0_6"/>
<dbReference type="OrthoDB" id="9804590at2"/>
<dbReference type="Proteomes" id="UP000009175">
    <property type="component" value="Chromosome"/>
</dbReference>
<dbReference type="GO" id="GO:0051539">
    <property type="term" value="F:4 iron, 4 sulfur cluster binding"/>
    <property type="evidence" value="ECO:0007669"/>
    <property type="project" value="UniProtKB-KW"/>
</dbReference>
<dbReference type="GO" id="GO:0005506">
    <property type="term" value="F:iron ion binding"/>
    <property type="evidence" value="ECO:0007669"/>
    <property type="project" value="UniProtKB-UniRule"/>
</dbReference>
<dbReference type="GO" id="GO:0070041">
    <property type="term" value="F:rRNA (uridine-C5-)-methyltransferase activity"/>
    <property type="evidence" value="ECO:0007669"/>
    <property type="project" value="UniProtKB-UniRule"/>
</dbReference>
<dbReference type="GO" id="GO:0070475">
    <property type="term" value="P:rRNA base methylation"/>
    <property type="evidence" value="ECO:0007669"/>
    <property type="project" value="TreeGrafter"/>
</dbReference>
<dbReference type="CDD" id="cd02440">
    <property type="entry name" value="AdoMet_MTases"/>
    <property type="match status" value="1"/>
</dbReference>
<dbReference type="Gene3D" id="2.40.50.1070">
    <property type="match status" value="1"/>
</dbReference>
<dbReference type="Gene3D" id="3.40.50.150">
    <property type="entry name" value="Vaccinia Virus protein VP39"/>
    <property type="match status" value="1"/>
</dbReference>
<dbReference type="HAMAP" id="MF_01012">
    <property type="entry name" value="23SrRNA_methyltr_RlmC"/>
    <property type="match status" value="1"/>
</dbReference>
<dbReference type="InterPro" id="IPR011825">
    <property type="entry name" value="23SrRNA_MeTrfase_RlmC"/>
</dbReference>
<dbReference type="InterPro" id="IPR030390">
    <property type="entry name" value="MeTrfase_TrmA_AS"/>
</dbReference>
<dbReference type="InterPro" id="IPR030391">
    <property type="entry name" value="MeTrfase_TrmA_CS"/>
</dbReference>
<dbReference type="InterPro" id="IPR029063">
    <property type="entry name" value="SAM-dependent_MTases_sf"/>
</dbReference>
<dbReference type="InterPro" id="IPR010280">
    <property type="entry name" value="U5_MeTrfase_fam"/>
</dbReference>
<dbReference type="NCBIfam" id="TIGR02085">
    <property type="entry name" value="meth_trns_rumB"/>
    <property type="match status" value="1"/>
</dbReference>
<dbReference type="NCBIfam" id="TIGR00479">
    <property type="entry name" value="rumA"/>
    <property type="match status" value="1"/>
</dbReference>
<dbReference type="PANTHER" id="PTHR11061">
    <property type="entry name" value="RNA M5U METHYLTRANSFERASE"/>
    <property type="match status" value="1"/>
</dbReference>
<dbReference type="PANTHER" id="PTHR11061:SF30">
    <property type="entry name" value="TRNA (URACIL(54)-C(5))-METHYLTRANSFERASE"/>
    <property type="match status" value="1"/>
</dbReference>
<dbReference type="Pfam" id="PF05958">
    <property type="entry name" value="tRNA_U5-meth_tr"/>
    <property type="match status" value="1"/>
</dbReference>
<dbReference type="SUPFAM" id="SSF53335">
    <property type="entry name" value="S-adenosyl-L-methionine-dependent methyltransferases"/>
    <property type="match status" value="1"/>
</dbReference>
<dbReference type="PROSITE" id="PS51687">
    <property type="entry name" value="SAM_MT_RNA_M5U"/>
    <property type="match status" value="1"/>
</dbReference>
<dbReference type="PROSITE" id="PS01230">
    <property type="entry name" value="TRMA_1"/>
    <property type="match status" value="1"/>
</dbReference>
<dbReference type="PROSITE" id="PS01231">
    <property type="entry name" value="TRMA_2"/>
    <property type="match status" value="1"/>
</dbReference>
<protein>
    <recommendedName>
        <fullName evidence="1">23S rRNA (uracil(747)-C(5))-methyltransferase RlmC</fullName>
        <ecNumber evidence="1">2.1.1.189</ecNumber>
    </recommendedName>
    <alternativeName>
        <fullName evidence="1">23S rRNA(m5U747)-methyltransferase</fullName>
    </alternativeName>
</protein>
<comment type="function">
    <text evidence="1">Catalyzes the formation of 5-methyl-uridine at position 747 (m5U747) in 23S rRNA.</text>
</comment>
<comment type="catalytic activity">
    <reaction evidence="1">
        <text>uridine(747) in 23S rRNA + S-adenosyl-L-methionine = 5-methyluridine(747) in 23S rRNA + S-adenosyl-L-homocysteine + H(+)</text>
        <dbReference type="Rhea" id="RHEA:42628"/>
        <dbReference type="Rhea" id="RHEA-COMP:10154"/>
        <dbReference type="Rhea" id="RHEA-COMP:10155"/>
        <dbReference type="ChEBI" id="CHEBI:15378"/>
        <dbReference type="ChEBI" id="CHEBI:57856"/>
        <dbReference type="ChEBI" id="CHEBI:59789"/>
        <dbReference type="ChEBI" id="CHEBI:65315"/>
        <dbReference type="ChEBI" id="CHEBI:74447"/>
        <dbReference type="EC" id="2.1.1.189"/>
    </reaction>
</comment>
<comment type="similarity">
    <text evidence="1">Belongs to the class I-like SAM-binding methyltransferase superfamily. RNA M5U methyltransferase family. RlmC subfamily.</text>
</comment>
<evidence type="ECO:0000255" key="1">
    <source>
        <dbReference type="HAMAP-Rule" id="MF_01012"/>
    </source>
</evidence>
<gene>
    <name evidence="1" type="primary">rlmC</name>
    <name type="synonym">rumB</name>
    <name type="ordered locus">Sama_0630</name>
</gene>
<sequence>MSCDYFNRGLCQSCRLMSKPVTEQLLEKEARLTHLLGGLPVDERLAPVSGPEFGFRNKAKMVVMGAAHAPVLGIPGPDGQPVDLSHCPLYPQDMQALLLELTSFVRRAGIPPYRVDKAKGELKFILLTRSAVRGEFMLRFVLRSKDAIPRIERELPKLLADFPAIKVVSVNLQPVHMARLEGEEEIFLTQATRLDEVFNGVPLFIRPKSFFQTNPEVASRLYATAAKWVDELSPKSLWDLFCGVGGFGLHCANESLPVTGIEIEAEAIDCAKTSAAAMGLDNLSFAALDSTDFAMGQQAQEVPEVIIVNPPRRGIGEELCERLSAFGPRAIIYSSCNPETLAKDLALISGYRIARVQLFDMFPHSDHFEVLCLLLKEAACASAD</sequence>
<accession>A1S382</accession>
<proteinExistence type="inferred from homology"/>